<comment type="function">
    <text evidence="2">A cytochrome P450 monooxygenase involved in the metabolism of arachidonic acid and its conjugates. Mechanistically, uses molecular oxygen inserting one oxygen atom into a substrate, and reducing the second into a water molecule, with two electrons provided by NADPH via cytochrome P450 reductase (CPR; NADPH-ferrihemoprotein reductase). Acts as an omega and omega-1 hydroxylase for arachidonic acid and possibly for other long chain fatty acids. May modulate the arachidonic acid signaling pathway and play a role in other fatty acid signaling processes. May down-regulate the biological activities of N-arachidonoyl-serotonin, an endocannabinoid that has anti-nociceptive effects through inhibition of fatty acid amide hydrolase FAAH, TRPV1 receptor and T-type calcium channels. Catalyzes C-2 oxidation of the indole ring of N-arachidonoyl-serotonin forming a less active product 2-oxo-N-arachidonoyl-serotonin.</text>
</comment>
<comment type="catalytic activity">
    <reaction evidence="2">
        <text>an omega-methyl-long-chain fatty acid + reduced [NADPH--hemoprotein reductase] + O2 = an omega-hydroxy-long-chain fatty acid + oxidized [NADPH--hemoprotein reductase] + H2O + H(+)</text>
        <dbReference type="Rhea" id="RHEA:56748"/>
        <dbReference type="Rhea" id="RHEA-COMP:11964"/>
        <dbReference type="Rhea" id="RHEA-COMP:11965"/>
        <dbReference type="ChEBI" id="CHEBI:15377"/>
        <dbReference type="ChEBI" id="CHEBI:15378"/>
        <dbReference type="ChEBI" id="CHEBI:15379"/>
        <dbReference type="ChEBI" id="CHEBI:57618"/>
        <dbReference type="ChEBI" id="CHEBI:58210"/>
        <dbReference type="ChEBI" id="CHEBI:140991"/>
        <dbReference type="ChEBI" id="CHEBI:140992"/>
        <dbReference type="EC" id="1.14.14.80"/>
    </reaction>
    <physiologicalReaction direction="left-to-right" evidence="2">
        <dbReference type="Rhea" id="RHEA:56749"/>
    </physiologicalReaction>
</comment>
<comment type="catalytic activity">
    <reaction evidence="2">
        <text>(5Z,8Z,11Z,14Z)-eicosatetraenoate + reduced [NADPH--hemoprotein reductase] + O2 = 19-hydroxy-(5Z,8Z,11Z,14Z)-eicosatetraenoate + oxidized [NADPH--hemoprotein reductase] + H2O + H(+)</text>
        <dbReference type="Rhea" id="RHEA:39759"/>
        <dbReference type="Rhea" id="RHEA-COMP:11964"/>
        <dbReference type="Rhea" id="RHEA-COMP:11965"/>
        <dbReference type="ChEBI" id="CHEBI:15377"/>
        <dbReference type="ChEBI" id="CHEBI:15378"/>
        <dbReference type="ChEBI" id="CHEBI:15379"/>
        <dbReference type="ChEBI" id="CHEBI:32395"/>
        <dbReference type="ChEBI" id="CHEBI:57618"/>
        <dbReference type="ChEBI" id="CHEBI:58210"/>
        <dbReference type="ChEBI" id="CHEBI:76627"/>
    </reaction>
    <physiologicalReaction direction="left-to-right" evidence="2">
        <dbReference type="Rhea" id="RHEA:39760"/>
    </physiologicalReaction>
</comment>
<comment type="catalytic activity">
    <reaction evidence="2">
        <text>(5Z,8Z,11Z,14Z)-eicosatetraenoate + reduced [NADPH--hemoprotein reductase] + O2 = 20-hydroxy-(5Z,8Z,11Z,14Z)-eicosatetraenoate + oxidized [NADPH--hemoprotein reductase] + H2O + H(+)</text>
        <dbReference type="Rhea" id="RHEA:39755"/>
        <dbReference type="Rhea" id="RHEA-COMP:11964"/>
        <dbReference type="Rhea" id="RHEA-COMP:11965"/>
        <dbReference type="ChEBI" id="CHEBI:15377"/>
        <dbReference type="ChEBI" id="CHEBI:15378"/>
        <dbReference type="ChEBI" id="CHEBI:15379"/>
        <dbReference type="ChEBI" id="CHEBI:32395"/>
        <dbReference type="ChEBI" id="CHEBI:57618"/>
        <dbReference type="ChEBI" id="CHEBI:58210"/>
        <dbReference type="ChEBI" id="CHEBI:76624"/>
    </reaction>
    <physiologicalReaction direction="left-to-right" evidence="2">
        <dbReference type="Rhea" id="RHEA:39756"/>
    </physiologicalReaction>
</comment>
<comment type="catalytic activity">
    <reaction evidence="2">
        <text>N-[(5Z,8Z,11Z,14Z)-eicosatetraenoyl]-serotonin + reduced [NADPH--hemoprotein reductase] + O2 = 2-oxo-N-[(5Z,8Z,11Z,14Z)-eicosatetraenoyl]-serotonin + oxidized [NADPH--hemoprotein reductase] + H2O + H(+)</text>
        <dbReference type="Rhea" id="RHEA:50296"/>
        <dbReference type="Rhea" id="RHEA-COMP:11964"/>
        <dbReference type="Rhea" id="RHEA-COMP:11965"/>
        <dbReference type="ChEBI" id="CHEBI:15377"/>
        <dbReference type="ChEBI" id="CHEBI:15378"/>
        <dbReference type="ChEBI" id="CHEBI:15379"/>
        <dbReference type="ChEBI" id="CHEBI:57618"/>
        <dbReference type="ChEBI" id="CHEBI:58210"/>
        <dbReference type="ChEBI" id="CHEBI:132255"/>
        <dbReference type="ChEBI" id="CHEBI:132256"/>
    </reaction>
    <physiologicalReaction direction="left-to-right" evidence="2">
        <dbReference type="Rhea" id="RHEA:50297"/>
    </physiologicalReaction>
</comment>
<comment type="cofactor">
    <cofactor evidence="2">
        <name>heme</name>
        <dbReference type="ChEBI" id="CHEBI:30413"/>
    </cofactor>
</comment>
<comment type="subcellular location">
    <subcellularLocation>
        <location evidence="2">Endoplasmic reticulum membrane</location>
        <topology evidence="3">Multi-pass membrane protein</topology>
    </subcellularLocation>
    <subcellularLocation>
        <location evidence="2">Microsome membrane</location>
        <topology evidence="3">Multi-pass membrane protein</topology>
    </subcellularLocation>
    <subcellularLocation>
        <location evidence="2">Mitochondrion inner membrane</location>
        <topology evidence="3">Multi-pass membrane protein</topology>
    </subcellularLocation>
</comment>
<comment type="similarity">
    <text evidence="4">Belongs to the cytochrome P450 family.</text>
</comment>
<feature type="chain" id="PRO_0000291755" description="Cytochrome P450 2U1">
    <location>
        <begin position="1"/>
        <end position="543"/>
    </location>
</feature>
<feature type="transmembrane region" description="Helical" evidence="3">
    <location>
        <begin position="32"/>
        <end position="52"/>
    </location>
</feature>
<feature type="transmembrane region" description="Helical" evidence="3">
    <location>
        <begin position="58"/>
        <end position="78"/>
    </location>
</feature>
<feature type="transmembrane region" description="Helical" evidence="3">
    <location>
        <begin position="261"/>
        <end position="281"/>
    </location>
</feature>
<feature type="transmembrane region" description="Helical" evidence="3">
    <location>
        <begin position="342"/>
        <end position="362"/>
    </location>
</feature>
<feature type="transmembrane region" description="Helical" evidence="3">
    <location>
        <begin position="495"/>
        <end position="515"/>
    </location>
</feature>
<feature type="binding site" description="axial binding residue" evidence="1">
    <location>
        <position position="490"/>
    </location>
    <ligand>
        <name>heme</name>
        <dbReference type="ChEBI" id="CHEBI:30413"/>
    </ligand>
    <ligandPart>
        <name>Fe</name>
        <dbReference type="ChEBI" id="CHEBI:18248"/>
    </ligandPart>
</feature>
<accession>Q0IIF9</accession>
<organism>
    <name type="scientific">Bos taurus</name>
    <name type="common">Bovine</name>
    <dbReference type="NCBI Taxonomy" id="9913"/>
    <lineage>
        <taxon>Eukaryota</taxon>
        <taxon>Metazoa</taxon>
        <taxon>Chordata</taxon>
        <taxon>Craniata</taxon>
        <taxon>Vertebrata</taxon>
        <taxon>Euteleostomi</taxon>
        <taxon>Mammalia</taxon>
        <taxon>Eutheria</taxon>
        <taxon>Laurasiatheria</taxon>
        <taxon>Artiodactyla</taxon>
        <taxon>Ruminantia</taxon>
        <taxon>Pecora</taxon>
        <taxon>Bovidae</taxon>
        <taxon>Bovinae</taxon>
        <taxon>Bos</taxon>
    </lineage>
</organism>
<name>CP2U1_BOVIN</name>
<proteinExistence type="evidence at transcript level"/>
<sequence>MASPGLPQPPTEDAAWPLRLLHAPPGLLRLDPTGGALLLLVLAALLGWSWLWRLPERGIPPGPAPWPVVGNFGFVLLPRFLRRKSWPYRRARNGGMNASGQGVQLLLADLGRVYGNIFSFLIGHYLVVVLNDFHSVREALVQQAEVFSDRPRVPLTSIMTKGKGIVFAHYGPVWRQQRKFSHSTLRHFGLGKLSLEPKIIEEFRYVKEEMQKHGDAPFNPFPIVNNAVSNIICSLCFGRRFDYTNSEFKQMLNFMSRALEVCLNTQLLLVNICSWLYYLPFGPFKELRQIEKDLTLFLKKIIKDHRESLDVENPQDFIDMYLLHVEEEKKNNSNSGFDEDYLFYIIGDLFIAGTDTTTNSLLWCLLYMSLHPNIQEKIHEEIARVIGADRAPSLTDKAQMPYTEATIMEVQRLSTVVPLSIPHMTSEKTVLQGFTIPKGTIILPNLWSVHRDPAIWEKPNDFYPDRFLDDQGQLIKKETFIPFGIGKRVCMGEQLAKMELFLMFVSLMQSFTFVLPKDSKPILTGKYGLTLAPHPFNIIISKR</sequence>
<gene>
    <name type="primary">CYP2U1</name>
</gene>
<reference key="1">
    <citation type="submission" date="2006-08" db="EMBL/GenBank/DDBJ databases">
        <authorList>
            <consortium name="NIH - Mammalian Gene Collection (MGC) project"/>
        </authorList>
    </citation>
    <scope>NUCLEOTIDE SEQUENCE [LARGE SCALE MRNA]</scope>
    <source>
        <strain>Hereford</strain>
        <tissue>Fetal liver</tissue>
    </source>
</reference>
<dbReference type="EC" id="1.14.14.80" evidence="2"/>
<dbReference type="EMBL" id="BC122663">
    <property type="protein sequence ID" value="AAI22664.1"/>
    <property type="molecule type" value="mRNA"/>
</dbReference>
<dbReference type="RefSeq" id="NP_001069518.1">
    <property type="nucleotide sequence ID" value="NM_001076050.2"/>
</dbReference>
<dbReference type="SMR" id="Q0IIF9"/>
<dbReference type="FunCoup" id="Q0IIF9">
    <property type="interactions" value="392"/>
</dbReference>
<dbReference type="STRING" id="9913.ENSBTAP00000017246"/>
<dbReference type="PaxDb" id="9913-ENSBTAP00000017246"/>
<dbReference type="GeneID" id="535227"/>
<dbReference type="KEGG" id="bta:535227"/>
<dbReference type="CTD" id="113612"/>
<dbReference type="eggNOG" id="KOG0156">
    <property type="taxonomic scope" value="Eukaryota"/>
</dbReference>
<dbReference type="InParanoid" id="Q0IIF9"/>
<dbReference type="OrthoDB" id="1844152at2759"/>
<dbReference type="Proteomes" id="UP000009136">
    <property type="component" value="Unplaced"/>
</dbReference>
<dbReference type="GO" id="GO:0005737">
    <property type="term" value="C:cytoplasm"/>
    <property type="evidence" value="ECO:0000318"/>
    <property type="project" value="GO_Central"/>
</dbReference>
<dbReference type="GO" id="GO:0005789">
    <property type="term" value="C:endoplasmic reticulum membrane"/>
    <property type="evidence" value="ECO:0007669"/>
    <property type="project" value="UniProtKB-SubCell"/>
</dbReference>
<dbReference type="GO" id="GO:0043231">
    <property type="term" value="C:intracellular membrane-bounded organelle"/>
    <property type="evidence" value="ECO:0000318"/>
    <property type="project" value="GO_Central"/>
</dbReference>
<dbReference type="GO" id="GO:0005743">
    <property type="term" value="C:mitochondrial inner membrane"/>
    <property type="evidence" value="ECO:0007669"/>
    <property type="project" value="UniProtKB-SubCell"/>
</dbReference>
<dbReference type="GO" id="GO:0052869">
    <property type="term" value="F:arachidonate omega-hydroxylase activity"/>
    <property type="evidence" value="ECO:0007669"/>
    <property type="project" value="RHEA"/>
</dbReference>
<dbReference type="GO" id="GO:0020037">
    <property type="term" value="F:heme binding"/>
    <property type="evidence" value="ECO:0000318"/>
    <property type="project" value="GO_Central"/>
</dbReference>
<dbReference type="GO" id="GO:0005506">
    <property type="term" value="F:iron ion binding"/>
    <property type="evidence" value="ECO:0007669"/>
    <property type="project" value="InterPro"/>
</dbReference>
<dbReference type="GO" id="GO:0102033">
    <property type="term" value="F:long-chain fatty acid omega-hydroxylase activity"/>
    <property type="evidence" value="ECO:0007669"/>
    <property type="project" value="UniProtKB-EC"/>
</dbReference>
<dbReference type="GO" id="GO:0016712">
    <property type="term" value="F:oxidoreductase activity, acting on paired donors, with incorporation or reduction of molecular oxygen, reduced flavin or flavoprotein as one donor, and incorporation of one atom of oxygen"/>
    <property type="evidence" value="ECO:0000318"/>
    <property type="project" value="GO_Central"/>
</dbReference>
<dbReference type="GO" id="GO:0008395">
    <property type="term" value="F:steroid hydroxylase activity"/>
    <property type="evidence" value="ECO:0000318"/>
    <property type="project" value="GO_Central"/>
</dbReference>
<dbReference type="GO" id="GO:0006629">
    <property type="term" value="P:lipid metabolic process"/>
    <property type="evidence" value="ECO:0007669"/>
    <property type="project" value="UniProtKB-KW"/>
</dbReference>
<dbReference type="GO" id="GO:0006082">
    <property type="term" value="P:organic acid metabolic process"/>
    <property type="evidence" value="ECO:0000318"/>
    <property type="project" value="GO_Central"/>
</dbReference>
<dbReference type="GO" id="GO:0006805">
    <property type="term" value="P:xenobiotic metabolic process"/>
    <property type="evidence" value="ECO:0000318"/>
    <property type="project" value="GO_Central"/>
</dbReference>
<dbReference type="CDD" id="cd20666">
    <property type="entry name" value="CYP2U1"/>
    <property type="match status" value="1"/>
</dbReference>
<dbReference type="FunFam" id="1.10.630.10:FF:000017">
    <property type="entry name" value="cytochrome P450 2U1 isoform X1"/>
    <property type="match status" value="1"/>
</dbReference>
<dbReference type="Gene3D" id="1.10.630.10">
    <property type="entry name" value="Cytochrome P450"/>
    <property type="match status" value="1"/>
</dbReference>
<dbReference type="InterPro" id="IPR001128">
    <property type="entry name" value="Cyt_P450"/>
</dbReference>
<dbReference type="InterPro" id="IPR017972">
    <property type="entry name" value="Cyt_P450_CS"/>
</dbReference>
<dbReference type="InterPro" id="IPR002401">
    <property type="entry name" value="Cyt_P450_E_grp-I"/>
</dbReference>
<dbReference type="InterPro" id="IPR008069">
    <property type="entry name" value="Cyt_P450_E_grp-I_CYP2D-like"/>
</dbReference>
<dbReference type="InterPro" id="IPR036396">
    <property type="entry name" value="Cyt_P450_sf"/>
</dbReference>
<dbReference type="InterPro" id="IPR050182">
    <property type="entry name" value="Cytochrome_P450_fam2"/>
</dbReference>
<dbReference type="PANTHER" id="PTHR24300:SF364">
    <property type="entry name" value="CYTOCHROME P450 2U1"/>
    <property type="match status" value="1"/>
</dbReference>
<dbReference type="PANTHER" id="PTHR24300">
    <property type="entry name" value="CYTOCHROME P450 508A4-RELATED"/>
    <property type="match status" value="1"/>
</dbReference>
<dbReference type="Pfam" id="PF00067">
    <property type="entry name" value="p450"/>
    <property type="match status" value="1"/>
</dbReference>
<dbReference type="PRINTS" id="PR00463">
    <property type="entry name" value="EP450I"/>
</dbReference>
<dbReference type="PRINTS" id="PR01686">
    <property type="entry name" value="EP450ICYP2D"/>
</dbReference>
<dbReference type="PRINTS" id="PR00385">
    <property type="entry name" value="P450"/>
</dbReference>
<dbReference type="SUPFAM" id="SSF48264">
    <property type="entry name" value="Cytochrome P450"/>
    <property type="match status" value="1"/>
</dbReference>
<dbReference type="PROSITE" id="PS00086">
    <property type="entry name" value="CYTOCHROME_P450"/>
    <property type="match status" value="1"/>
</dbReference>
<keyword id="KW-0256">Endoplasmic reticulum</keyword>
<keyword id="KW-0349">Heme</keyword>
<keyword id="KW-0408">Iron</keyword>
<keyword id="KW-0443">Lipid metabolism</keyword>
<keyword id="KW-0472">Membrane</keyword>
<keyword id="KW-0479">Metal-binding</keyword>
<keyword id="KW-0492">Microsome</keyword>
<keyword id="KW-0496">Mitochondrion</keyword>
<keyword id="KW-0999">Mitochondrion inner membrane</keyword>
<keyword id="KW-0503">Monooxygenase</keyword>
<keyword id="KW-0560">Oxidoreductase</keyword>
<keyword id="KW-1185">Reference proteome</keyword>
<keyword id="KW-0812">Transmembrane</keyword>
<keyword id="KW-1133">Transmembrane helix</keyword>
<protein>
    <recommendedName>
        <fullName>Cytochrome P450 2U1</fullName>
    </recommendedName>
    <alternativeName>
        <fullName>Long-chain fatty acid omega-monooxygenase</fullName>
        <ecNumber evidence="2">1.14.14.80</ecNumber>
    </alternativeName>
</protein>
<evidence type="ECO:0000250" key="1"/>
<evidence type="ECO:0000250" key="2">
    <source>
        <dbReference type="UniProtKB" id="Q7Z449"/>
    </source>
</evidence>
<evidence type="ECO:0000255" key="3"/>
<evidence type="ECO:0000305" key="4"/>